<comment type="function">
    <text evidence="1">Removes the 2'-phosphate from RNA via an intermediate in which the phosphate is ADP-ribosylated by NAD followed by a presumed transesterification to release the RNA and generate ADP-ribose 1''-2''-cyclic phosphate (APPR&gt;P). May function as an ADP-ribosylase.</text>
</comment>
<comment type="similarity">
    <text evidence="1">Belongs to the KptA/TPT1 family.</text>
</comment>
<accession>Q46DV8</accession>
<evidence type="ECO:0000255" key="1">
    <source>
        <dbReference type="HAMAP-Rule" id="MF_00299"/>
    </source>
</evidence>
<keyword id="KW-0520">NAD</keyword>
<keyword id="KW-0808">Transferase</keyword>
<dbReference type="EC" id="2.7.1.-" evidence="1"/>
<dbReference type="EMBL" id="CP000099">
    <property type="protein sequence ID" value="AAZ69934.1"/>
    <property type="molecule type" value="Genomic_DNA"/>
</dbReference>
<dbReference type="SMR" id="Q46DV8"/>
<dbReference type="STRING" id="269797.Mbar_A0962"/>
<dbReference type="PaxDb" id="269797-Mbar_A0962"/>
<dbReference type="KEGG" id="mba:Mbar_A0962"/>
<dbReference type="eggNOG" id="arCOG04063">
    <property type="taxonomic scope" value="Archaea"/>
</dbReference>
<dbReference type="HOGENOM" id="CLU_052998_4_1_2"/>
<dbReference type="OrthoDB" id="24376at2157"/>
<dbReference type="GO" id="GO:0003950">
    <property type="term" value="F:NAD+ poly-ADP-ribosyltransferase activity"/>
    <property type="evidence" value="ECO:0007669"/>
    <property type="project" value="InterPro"/>
</dbReference>
<dbReference type="GO" id="GO:0000215">
    <property type="term" value="F:tRNA 2'-phosphotransferase activity"/>
    <property type="evidence" value="ECO:0007669"/>
    <property type="project" value="TreeGrafter"/>
</dbReference>
<dbReference type="GO" id="GO:0006388">
    <property type="term" value="P:tRNA splicing, via endonucleolytic cleavage and ligation"/>
    <property type="evidence" value="ECO:0007669"/>
    <property type="project" value="UniProtKB-UniRule"/>
</dbReference>
<dbReference type="Gene3D" id="3.20.170.30">
    <property type="match status" value="1"/>
</dbReference>
<dbReference type="Gene3D" id="1.10.10.970">
    <property type="entry name" value="RNA 2'-phosphotransferase, Tpt1/KptA family, N-terminal domain"/>
    <property type="match status" value="1"/>
</dbReference>
<dbReference type="HAMAP" id="MF_00299">
    <property type="entry name" value="KptA"/>
    <property type="match status" value="1"/>
</dbReference>
<dbReference type="InterPro" id="IPR002745">
    <property type="entry name" value="Ptrans_KptA/Tpt1"/>
</dbReference>
<dbReference type="InterPro" id="IPR042081">
    <property type="entry name" value="RNA_2'-PTrans_C"/>
</dbReference>
<dbReference type="InterPro" id="IPR022928">
    <property type="entry name" value="RNA_2'-PTrans_KptA"/>
</dbReference>
<dbReference type="InterPro" id="IPR042080">
    <property type="entry name" value="RNA_2'-PTrans_N"/>
</dbReference>
<dbReference type="NCBIfam" id="NF002015">
    <property type="entry name" value="PRK00819.1-5"/>
    <property type="match status" value="1"/>
</dbReference>
<dbReference type="PANTHER" id="PTHR12684">
    <property type="entry name" value="PUTATIVE PHOSPHOTRANSFERASE"/>
    <property type="match status" value="1"/>
</dbReference>
<dbReference type="PANTHER" id="PTHR12684:SF2">
    <property type="entry name" value="TRNA 2'-PHOSPHOTRANSFERASE 1"/>
    <property type="match status" value="1"/>
</dbReference>
<dbReference type="Pfam" id="PF01885">
    <property type="entry name" value="PTS_2-RNA"/>
    <property type="match status" value="1"/>
</dbReference>
<dbReference type="SUPFAM" id="SSF56399">
    <property type="entry name" value="ADP-ribosylation"/>
    <property type="match status" value="1"/>
</dbReference>
<proteinExistence type="inferred from homology"/>
<sequence length="207" mass="24164">MIRKCTEHGYFRGGSCLQCKRPGRYLLDDNKEEKLGRFVSGTLRHFPESAGVTMDRFGWVNINDFCDVMRKRYSWMRKEYLYALVESDEKGRYEIRNSRIRARYGHSVNIDLDYRESDSPYLYYGASPEEVDVLLENGIFPIKQRYVHLSTSYEKAVEVALIHTENPVILQIDAFKAQEDGISLKLATDDIVLAERIPPEYLFVVEE</sequence>
<feature type="chain" id="PRO_0000231958" description="Probable RNA 2'-phosphotransferase">
    <location>
        <begin position="1"/>
        <end position="207"/>
    </location>
</feature>
<name>KPTA_METBF</name>
<protein>
    <recommendedName>
        <fullName evidence="1">Probable RNA 2'-phosphotransferase</fullName>
        <ecNumber evidence="1">2.7.1.-</ecNumber>
    </recommendedName>
</protein>
<reference key="1">
    <citation type="journal article" date="2006" name="J. Bacteriol.">
        <title>The Methanosarcina barkeri genome: comparative analysis with Methanosarcina acetivorans and Methanosarcina mazei reveals extensive rearrangement within methanosarcinal genomes.</title>
        <authorList>
            <person name="Maeder D.L."/>
            <person name="Anderson I."/>
            <person name="Brettin T.S."/>
            <person name="Bruce D.C."/>
            <person name="Gilna P."/>
            <person name="Han C.S."/>
            <person name="Lapidus A."/>
            <person name="Metcalf W.W."/>
            <person name="Saunders E."/>
            <person name="Tapia R."/>
            <person name="Sowers K.R."/>
        </authorList>
    </citation>
    <scope>NUCLEOTIDE SEQUENCE [LARGE SCALE GENOMIC DNA]</scope>
    <source>
        <strain>Fusaro / DSM 804</strain>
    </source>
</reference>
<organism>
    <name type="scientific">Methanosarcina barkeri (strain Fusaro / DSM 804)</name>
    <dbReference type="NCBI Taxonomy" id="269797"/>
    <lineage>
        <taxon>Archaea</taxon>
        <taxon>Methanobacteriati</taxon>
        <taxon>Methanobacteriota</taxon>
        <taxon>Stenosarchaea group</taxon>
        <taxon>Methanomicrobia</taxon>
        <taxon>Methanosarcinales</taxon>
        <taxon>Methanosarcinaceae</taxon>
        <taxon>Methanosarcina</taxon>
    </lineage>
</organism>
<gene>
    <name evidence="1" type="primary">kptA</name>
    <name type="ordered locus">Mbar_A0962</name>
</gene>